<evidence type="ECO:0000250" key="1">
    <source>
        <dbReference type="UniProtKB" id="P00410"/>
    </source>
</evidence>
<evidence type="ECO:0000255" key="2"/>
<evidence type="ECO:0000305" key="3"/>
<keyword id="KW-0186">Copper</keyword>
<keyword id="KW-0249">Electron transport</keyword>
<keyword id="KW-0460">Magnesium</keyword>
<keyword id="KW-0472">Membrane</keyword>
<keyword id="KW-0479">Metal-binding</keyword>
<keyword id="KW-0496">Mitochondrion</keyword>
<keyword id="KW-0999">Mitochondrion inner membrane</keyword>
<keyword id="KW-0679">Respiratory chain</keyword>
<keyword id="KW-1278">Translocase</keyword>
<keyword id="KW-0812">Transmembrane</keyword>
<keyword id="KW-1133">Transmembrane helix</keyword>
<keyword id="KW-0813">Transport</keyword>
<organism>
    <name type="scientific">Oenothera berteroana</name>
    <name type="common">Bertero's evening primrose</name>
    <dbReference type="NCBI Taxonomy" id="3950"/>
    <lineage>
        <taxon>Eukaryota</taxon>
        <taxon>Viridiplantae</taxon>
        <taxon>Streptophyta</taxon>
        <taxon>Embryophyta</taxon>
        <taxon>Tracheophyta</taxon>
        <taxon>Spermatophyta</taxon>
        <taxon>Magnoliopsida</taxon>
        <taxon>eudicotyledons</taxon>
        <taxon>Gunneridae</taxon>
        <taxon>Pentapetalae</taxon>
        <taxon>rosids</taxon>
        <taxon>malvids</taxon>
        <taxon>Myrtales</taxon>
        <taxon>Onagraceae</taxon>
        <taxon>Onagroideae</taxon>
        <taxon>Onagreae</taxon>
        <taxon>Oenothera</taxon>
    </lineage>
</organism>
<comment type="function">
    <text evidence="1">Component of the cytochrome c oxidase, the last enzyme in the mitochondrial electron transport chain which drives oxidative phosphorylation. The respiratory chain contains 3 multisubunit complexes succinate dehydrogenase (complex II, CII), ubiquinol-cytochrome c oxidoreductase (cytochrome b-c1 complex, complex III, CIII) and cytochrome c oxidase (complex IV, CIV), that cooperate to transfer electrons derived from NADH and succinate to molecular oxygen, creating an electrochemical gradient over the inner membrane that drives transmembrane transport and the ATP synthase. Cytochrome c oxidase is the component of the respiratory chain that catalyzes the reduction of oxygen to water. Electrons originating from reduced cytochrome c in the intermembrane space (IMS) are transferred via the dinuclear copper A center (CU(A)) of subunit 2 and heme A of subunit 1 to the active site in subunit 1, a binuclear center (BNC) formed by heme A3 and copper B (CU(B)). The BNC reduces molecular oxygen to 2 water molecules using 4 electrons from cytochrome c in the IMS and 4 protons from the mitochondrial matrix.</text>
</comment>
<comment type="catalytic activity">
    <reaction evidence="1">
        <text>4 Fe(II)-[cytochrome c] + O2 + 8 H(+)(in) = 4 Fe(III)-[cytochrome c] + 2 H2O + 4 H(+)(out)</text>
        <dbReference type="Rhea" id="RHEA:11436"/>
        <dbReference type="Rhea" id="RHEA-COMP:10350"/>
        <dbReference type="Rhea" id="RHEA-COMP:14399"/>
        <dbReference type="ChEBI" id="CHEBI:15377"/>
        <dbReference type="ChEBI" id="CHEBI:15378"/>
        <dbReference type="ChEBI" id="CHEBI:15379"/>
        <dbReference type="ChEBI" id="CHEBI:29033"/>
        <dbReference type="ChEBI" id="CHEBI:29034"/>
        <dbReference type="EC" id="7.1.1.9"/>
    </reaction>
    <physiologicalReaction direction="left-to-right" evidence="1">
        <dbReference type="Rhea" id="RHEA:11437"/>
    </physiologicalReaction>
</comment>
<comment type="cofactor">
    <cofactor evidence="1">
        <name>Cu cation</name>
        <dbReference type="ChEBI" id="CHEBI:23378"/>
    </cofactor>
    <text evidence="1">Binds a dinuclear copper A center per subunit.</text>
</comment>
<comment type="subunit">
    <text evidence="1">Component of the cytochrome c oxidase (complex IV, CIV), a multisubunit enzyme composed of a catalytic core of 3 subunits and several supernumerary subunits. The complex exists as a monomer or a dimer and forms supercomplexes (SCs) in the inner mitochondrial membrane with ubiquinol-cytochrome c oxidoreductase (cytochrome b-c1 complex, complex III, CIII).</text>
</comment>
<comment type="subcellular location">
    <subcellularLocation>
        <location evidence="1">Mitochondrion inner membrane</location>
        <topology evidence="1">Multi-pass membrane protein</topology>
    </subcellularLocation>
</comment>
<comment type="similarity">
    <text evidence="3">Belongs to the cytochrome c oxidase subunit 2 family.</text>
</comment>
<gene>
    <name type="primary">COX2</name>
    <name type="synonym">COII</name>
    <name type="synonym">COXII</name>
</gene>
<sequence length="258" mass="29457">MIVNECLFFTIALCDAAEPWQLGFQDAATPMMQGIIDLHHDILFFLILILVFVLWILVRALWHFYYKKNPIPQRIVHGTTIEILWTIFPSIILMFIAIPSFALLYSMDEVVVDPAMTLKAIGHQWYWTYEYSDYNSSDEQSLTFDSYMIPEDDLELGQLRLLEVDNRVVVPVKTNLRLIVTSADVLHSWAVPSLGVKCDAVPGRLNQISMLVQREGVYYGQCSEICGTNHAFMPIVIEAVSATDYTNWVSNLFIPPTS</sequence>
<reference key="1">
    <citation type="journal article" date="1983" name="EMBO J.">
        <title>Cytochrome oxidase subunit II gene in mitochondria of Oenothera has no intron.</title>
        <authorList>
            <person name="Hiesel R."/>
            <person name="Brennicke A."/>
        </authorList>
    </citation>
    <scope>NUCLEOTIDE SEQUENCE [GENOMIC DNA]</scope>
    <source>
        <strain>cv. Munzia</strain>
    </source>
</reference>
<geneLocation type="mitochondrion"/>
<proteinExistence type="inferred from homology"/>
<dbReference type="EC" id="7.1.1.9"/>
<dbReference type="EMBL" id="X00212">
    <property type="protein sequence ID" value="CAA25038.1"/>
    <property type="molecule type" value="Genomic_DNA"/>
</dbReference>
<dbReference type="SMR" id="P05490"/>
<dbReference type="GO" id="GO:0005743">
    <property type="term" value="C:mitochondrial inner membrane"/>
    <property type="evidence" value="ECO:0007669"/>
    <property type="project" value="UniProtKB-SubCell"/>
</dbReference>
<dbReference type="GO" id="GO:0005507">
    <property type="term" value="F:copper ion binding"/>
    <property type="evidence" value="ECO:0007669"/>
    <property type="project" value="InterPro"/>
</dbReference>
<dbReference type="GO" id="GO:0004129">
    <property type="term" value="F:cytochrome-c oxidase activity"/>
    <property type="evidence" value="ECO:0007669"/>
    <property type="project" value="UniProtKB-EC"/>
</dbReference>
<dbReference type="GO" id="GO:0042773">
    <property type="term" value="P:ATP synthesis coupled electron transport"/>
    <property type="evidence" value="ECO:0007669"/>
    <property type="project" value="TreeGrafter"/>
</dbReference>
<dbReference type="CDD" id="cd13912">
    <property type="entry name" value="CcO_II_C"/>
    <property type="match status" value="1"/>
</dbReference>
<dbReference type="FunFam" id="1.10.287.90:FF:000004">
    <property type="entry name" value="Cytochrome c oxidase subunit 2"/>
    <property type="match status" value="1"/>
</dbReference>
<dbReference type="FunFam" id="2.60.40.420:FF:000001">
    <property type="entry name" value="Cytochrome c oxidase subunit 2"/>
    <property type="match status" value="1"/>
</dbReference>
<dbReference type="Gene3D" id="1.10.287.90">
    <property type="match status" value="1"/>
</dbReference>
<dbReference type="Gene3D" id="2.60.40.420">
    <property type="entry name" value="Cupredoxins - blue copper proteins"/>
    <property type="match status" value="1"/>
</dbReference>
<dbReference type="InterPro" id="IPR045187">
    <property type="entry name" value="CcO_II"/>
</dbReference>
<dbReference type="InterPro" id="IPR002429">
    <property type="entry name" value="CcO_II-like_C"/>
</dbReference>
<dbReference type="InterPro" id="IPR034210">
    <property type="entry name" value="CcO_II_C"/>
</dbReference>
<dbReference type="InterPro" id="IPR001505">
    <property type="entry name" value="Copper_CuA"/>
</dbReference>
<dbReference type="InterPro" id="IPR008972">
    <property type="entry name" value="Cupredoxin"/>
</dbReference>
<dbReference type="InterPro" id="IPR014222">
    <property type="entry name" value="Cyt_c_oxidase_su2"/>
</dbReference>
<dbReference type="InterPro" id="IPR011759">
    <property type="entry name" value="Cyt_c_oxidase_su2_TM_dom"/>
</dbReference>
<dbReference type="InterPro" id="IPR036257">
    <property type="entry name" value="Cyt_c_oxidase_su2_TM_sf"/>
</dbReference>
<dbReference type="NCBIfam" id="TIGR02866">
    <property type="entry name" value="CoxB"/>
    <property type="match status" value="1"/>
</dbReference>
<dbReference type="PANTHER" id="PTHR22888:SF9">
    <property type="entry name" value="CYTOCHROME C OXIDASE SUBUNIT 2"/>
    <property type="match status" value="1"/>
</dbReference>
<dbReference type="PANTHER" id="PTHR22888">
    <property type="entry name" value="CYTOCHROME C OXIDASE, SUBUNIT II"/>
    <property type="match status" value="1"/>
</dbReference>
<dbReference type="Pfam" id="PF00116">
    <property type="entry name" value="COX2"/>
    <property type="match status" value="1"/>
</dbReference>
<dbReference type="Pfam" id="PF02790">
    <property type="entry name" value="COX2_TM"/>
    <property type="match status" value="1"/>
</dbReference>
<dbReference type="PRINTS" id="PR01166">
    <property type="entry name" value="CYCOXIDASEII"/>
</dbReference>
<dbReference type="SUPFAM" id="SSF49503">
    <property type="entry name" value="Cupredoxins"/>
    <property type="match status" value="1"/>
</dbReference>
<dbReference type="SUPFAM" id="SSF81464">
    <property type="entry name" value="Cytochrome c oxidase subunit II-like, transmembrane region"/>
    <property type="match status" value="1"/>
</dbReference>
<dbReference type="PROSITE" id="PS00078">
    <property type="entry name" value="COX2"/>
    <property type="match status" value="1"/>
</dbReference>
<dbReference type="PROSITE" id="PS50857">
    <property type="entry name" value="COX2_CUA"/>
    <property type="match status" value="1"/>
</dbReference>
<dbReference type="PROSITE" id="PS50999">
    <property type="entry name" value="COX2_TM"/>
    <property type="match status" value="1"/>
</dbReference>
<name>COX2_OENBE</name>
<accession>P05490</accession>
<protein>
    <recommendedName>
        <fullName>Cytochrome c oxidase subunit 2</fullName>
        <ecNumber>7.1.1.9</ecNumber>
    </recommendedName>
    <alternativeName>
        <fullName>Cytochrome c oxidase polypeptide II</fullName>
    </alternativeName>
</protein>
<feature type="chain" id="PRO_0000183642" description="Cytochrome c oxidase subunit 2">
    <location>
        <begin position="1"/>
        <end position="258"/>
    </location>
</feature>
<feature type="topological domain" description="Mitochondrial intermembrane" evidence="2">
    <location>
        <begin position="1"/>
        <end position="41"/>
    </location>
</feature>
<feature type="transmembrane region" description="Helical" evidence="2">
    <location>
        <begin position="42"/>
        <end position="58"/>
    </location>
</feature>
<feature type="topological domain" description="Mitochondrial matrix" evidence="2">
    <location>
        <begin position="59"/>
        <end position="82"/>
    </location>
</feature>
<feature type="transmembrane region" description="Helical" evidence="2">
    <location>
        <begin position="83"/>
        <end position="104"/>
    </location>
</feature>
<feature type="topological domain" description="Mitochondrial intermembrane" evidence="2">
    <location>
        <begin position="105"/>
        <end position="258"/>
    </location>
</feature>
<feature type="binding site" evidence="1">
    <location>
        <position position="187"/>
    </location>
    <ligand>
        <name>Cu cation</name>
        <dbReference type="ChEBI" id="CHEBI:23378"/>
        <label>A1</label>
    </ligand>
</feature>
<feature type="binding site" evidence="1">
    <location>
        <position position="222"/>
    </location>
    <ligand>
        <name>Cu cation</name>
        <dbReference type="ChEBI" id="CHEBI:23378"/>
        <label>A1</label>
    </ligand>
</feature>
<feature type="binding site" evidence="1">
    <location>
        <position position="222"/>
    </location>
    <ligand>
        <name>Cu cation</name>
        <dbReference type="ChEBI" id="CHEBI:23378"/>
        <label>A2</label>
    </ligand>
</feature>
<feature type="binding site" evidence="1">
    <location>
        <position position="224"/>
    </location>
    <ligand>
        <name>Cu cation</name>
        <dbReference type="ChEBI" id="CHEBI:23378"/>
        <label>A2</label>
    </ligand>
</feature>
<feature type="binding site" evidence="1">
    <location>
        <position position="224"/>
    </location>
    <ligand>
        <name>Mg(2+)</name>
        <dbReference type="ChEBI" id="CHEBI:18420"/>
        <note>ligand shared with subunit 1</note>
    </ligand>
</feature>
<feature type="binding site" evidence="1">
    <location>
        <position position="226"/>
    </location>
    <ligand>
        <name>Cu cation</name>
        <dbReference type="ChEBI" id="CHEBI:23378"/>
        <label>A1</label>
    </ligand>
</feature>
<feature type="binding site" evidence="1">
    <location>
        <position position="226"/>
    </location>
    <ligand>
        <name>Cu cation</name>
        <dbReference type="ChEBI" id="CHEBI:23378"/>
        <label>A2</label>
    </ligand>
</feature>
<feature type="binding site" evidence="1">
    <location>
        <position position="230"/>
    </location>
    <ligand>
        <name>Cu cation</name>
        <dbReference type="ChEBI" id="CHEBI:23378"/>
        <label>A2</label>
    </ligand>
</feature>
<feature type="binding site" evidence="1">
    <location>
        <position position="233"/>
    </location>
    <ligand>
        <name>Cu cation</name>
        <dbReference type="ChEBI" id="CHEBI:23378"/>
        <label>A1</label>
    </ligand>
</feature>